<dbReference type="EMBL" id="U73659">
    <property type="protein sequence ID" value="AAB18245.1"/>
    <property type="molecule type" value="mRNA"/>
</dbReference>
<dbReference type="RefSeq" id="NP_001310711.1">
    <property type="nucleotide sequence ID" value="NM_001323782.1"/>
</dbReference>
<dbReference type="SMR" id="Q95179"/>
<dbReference type="GlyCosmos" id="Q95179">
    <property type="glycosylation" value="3 sites, No reported glycans"/>
</dbReference>
<dbReference type="GeneID" id="106835472"/>
<dbReference type="KEGG" id="eai:106835472"/>
<dbReference type="CTD" id="2492"/>
<dbReference type="OrthoDB" id="125246at314145"/>
<dbReference type="Proteomes" id="UP000694387">
    <property type="component" value="Unplaced"/>
</dbReference>
<dbReference type="GO" id="GO:0016020">
    <property type="term" value="C:membrane"/>
    <property type="evidence" value="ECO:0000250"/>
    <property type="project" value="UniProtKB"/>
</dbReference>
<dbReference type="GO" id="GO:0005886">
    <property type="term" value="C:plasma membrane"/>
    <property type="evidence" value="ECO:0000250"/>
    <property type="project" value="UniProtKB"/>
</dbReference>
<dbReference type="GO" id="GO:0043235">
    <property type="term" value="C:receptor complex"/>
    <property type="evidence" value="ECO:0000250"/>
    <property type="project" value="UniProtKB"/>
</dbReference>
<dbReference type="GO" id="GO:0004963">
    <property type="term" value="F:follicle-stimulating hormone receptor activity"/>
    <property type="evidence" value="ECO:0000250"/>
    <property type="project" value="UniProtKB"/>
</dbReference>
<dbReference type="GO" id="GO:0008528">
    <property type="term" value="F:G protein-coupled peptide receptor activity"/>
    <property type="evidence" value="ECO:0007669"/>
    <property type="project" value="TreeGrafter"/>
</dbReference>
<dbReference type="GO" id="GO:0007189">
    <property type="term" value="P:adenylate cyclase-activating G protein-coupled receptor signaling pathway"/>
    <property type="evidence" value="ECO:0007669"/>
    <property type="project" value="TreeGrafter"/>
</dbReference>
<dbReference type="GO" id="GO:0071372">
    <property type="term" value="P:cellular response to follicle-stimulating hormone stimulus"/>
    <property type="evidence" value="ECO:0000250"/>
    <property type="project" value="UniProtKB"/>
</dbReference>
<dbReference type="GO" id="GO:0042699">
    <property type="term" value="P:follicle-stimulating hormone signaling pathway"/>
    <property type="evidence" value="ECO:0000250"/>
    <property type="project" value="UniProtKB"/>
</dbReference>
<dbReference type="GO" id="GO:0007186">
    <property type="term" value="P:G protein-coupled receptor signaling pathway"/>
    <property type="evidence" value="ECO:0000250"/>
    <property type="project" value="UniProtKB"/>
</dbReference>
<dbReference type="GO" id="GO:0009755">
    <property type="term" value="P:hormone-mediated signaling pathway"/>
    <property type="evidence" value="ECO:0007669"/>
    <property type="project" value="TreeGrafter"/>
</dbReference>
<dbReference type="GO" id="GO:0008584">
    <property type="term" value="P:male gonad development"/>
    <property type="evidence" value="ECO:0007669"/>
    <property type="project" value="TreeGrafter"/>
</dbReference>
<dbReference type="GO" id="GO:0070374">
    <property type="term" value="P:positive regulation of ERK1 and ERK2 cascade"/>
    <property type="evidence" value="ECO:0000250"/>
    <property type="project" value="UniProtKB"/>
</dbReference>
<dbReference type="GO" id="GO:0051897">
    <property type="term" value="P:positive regulation of phosphatidylinositol 3-kinase/protein kinase B signal transduction"/>
    <property type="evidence" value="ECO:0000250"/>
    <property type="project" value="UniProtKB"/>
</dbReference>
<dbReference type="GO" id="GO:0010738">
    <property type="term" value="P:regulation of protein kinase A signaling"/>
    <property type="evidence" value="ECO:0000250"/>
    <property type="project" value="UniProtKB"/>
</dbReference>
<dbReference type="CDD" id="cd15360">
    <property type="entry name" value="7tmA_FSH-R"/>
    <property type="match status" value="1"/>
</dbReference>
<dbReference type="FunFam" id="3.80.10.10:FF:000154">
    <property type="entry name" value="Follicle-stimulating hormone receptor"/>
    <property type="match status" value="1"/>
</dbReference>
<dbReference type="FunFam" id="1.20.1070.10:FF:000019">
    <property type="entry name" value="Lutropin-choriogonadotropic hormone receptor"/>
    <property type="match status" value="1"/>
</dbReference>
<dbReference type="Gene3D" id="1.20.1070.10">
    <property type="entry name" value="Rhodopsin 7-helix transmembrane proteins"/>
    <property type="match status" value="1"/>
</dbReference>
<dbReference type="Gene3D" id="3.80.10.10">
    <property type="entry name" value="Ribonuclease Inhibitor"/>
    <property type="match status" value="1"/>
</dbReference>
<dbReference type="InterPro" id="IPR002272">
    <property type="entry name" value="FSH_rcpt"/>
</dbReference>
<dbReference type="InterPro" id="IPR024635">
    <property type="entry name" value="GnHR_TM"/>
</dbReference>
<dbReference type="InterPro" id="IPR000276">
    <property type="entry name" value="GPCR_Rhodpsn"/>
</dbReference>
<dbReference type="InterPro" id="IPR017452">
    <property type="entry name" value="GPCR_Rhodpsn_7TM"/>
</dbReference>
<dbReference type="InterPro" id="IPR002131">
    <property type="entry name" value="Gphrmn_rcpt_fam"/>
</dbReference>
<dbReference type="InterPro" id="IPR001611">
    <property type="entry name" value="Leu-rich_rpt"/>
</dbReference>
<dbReference type="InterPro" id="IPR026906">
    <property type="entry name" value="LRR_5"/>
</dbReference>
<dbReference type="InterPro" id="IPR032675">
    <property type="entry name" value="LRR_dom_sf"/>
</dbReference>
<dbReference type="PANTHER" id="PTHR24372:SF5">
    <property type="entry name" value="FOLLICLE-STIMULATING HORMONE RECEPTOR"/>
    <property type="match status" value="1"/>
</dbReference>
<dbReference type="PANTHER" id="PTHR24372">
    <property type="entry name" value="GLYCOPROTEIN HORMONE RECEPTOR"/>
    <property type="match status" value="1"/>
</dbReference>
<dbReference type="Pfam" id="PF00001">
    <property type="entry name" value="7tm_1"/>
    <property type="match status" value="1"/>
</dbReference>
<dbReference type="Pfam" id="PF12369">
    <property type="entry name" value="GnHR_trans"/>
    <property type="match status" value="1"/>
</dbReference>
<dbReference type="Pfam" id="PF13306">
    <property type="entry name" value="LRR_5"/>
    <property type="match status" value="2"/>
</dbReference>
<dbReference type="PRINTS" id="PR01143">
    <property type="entry name" value="FSHRECEPTOR"/>
</dbReference>
<dbReference type="PRINTS" id="PR00373">
    <property type="entry name" value="GLYCHORMONER"/>
</dbReference>
<dbReference type="PRINTS" id="PR00237">
    <property type="entry name" value="GPCRRHODOPSN"/>
</dbReference>
<dbReference type="SUPFAM" id="SSF81321">
    <property type="entry name" value="Family A G protein-coupled receptor-like"/>
    <property type="match status" value="1"/>
</dbReference>
<dbReference type="SUPFAM" id="SSF52058">
    <property type="entry name" value="L domain-like"/>
    <property type="match status" value="1"/>
</dbReference>
<dbReference type="PROSITE" id="PS00237">
    <property type="entry name" value="G_PROTEIN_RECEP_F1_1"/>
    <property type="match status" value="1"/>
</dbReference>
<dbReference type="PROSITE" id="PS50262">
    <property type="entry name" value="G_PROTEIN_RECEP_F1_2"/>
    <property type="match status" value="1"/>
</dbReference>
<dbReference type="PROSITE" id="PS51450">
    <property type="entry name" value="LRR"/>
    <property type="match status" value="3"/>
</dbReference>
<evidence type="ECO:0000250" key="1"/>
<evidence type="ECO:0000250" key="2">
    <source>
        <dbReference type="UniProtKB" id="P20395"/>
    </source>
</evidence>
<evidence type="ECO:0000250" key="3">
    <source>
        <dbReference type="UniProtKB" id="P23945"/>
    </source>
</evidence>
<evidence type="ECO:0000255" key="4"/>
<evidence type="ECO:0000255" key="5">
    <source>
        <dbReference type="PROSITE-ProRule" id="PRU00521"/>
    </source>
</evidence>
<name>FSHR_EQUAS</name>
<feature type="signal peptide" evidence="4">
    <location>
        <begin position="1"/>
        <end position="17"/>
    </location>
</feature>
<feature type="chain" id="PRO_0000012769" description="Follicle-stimulating hormone receptor">
    <location>
        <begin position="18"/>
        <end position="687"/>
    </location>
</feature>
<feature type="topological domain" description="Extracellular" evidence="4">
    <location>
        <begin position="18"/>
        <end position="358"/>
    </location>
</feature>
<feature type="transmembrane region" description="Helical; Name=1" evidence="4">
    <location>
        <begin position="359"/>
        <end position="379"/>
    </location>
</feature>
<feature type="topological domain" description="Cytoplasmic" evidence="4">
    <location>
        <begin position="380"/>
        <end position="390"/>
    </location>
</feature>
<feature type="transmembrane region" description="Helical; Name=2" evidence="4">
    <location>
        <begin position="391"/>
        <end position="413"/>
    </location>
</feature>
<feature type="topological domain" description="Extracellular" evidence="4">
    <location>
        <begin position="414"/>
        <end position="435"/>
    </location>
</feature>
<feature type="transmembrane region" description="Helical; Name=3" evidence="4">
    <location>
        <begin position="436"/>
        <end position="457"/>
    </location>
</feature>
<feature type="topological domain" description="Cytoplasmic" evidence="4">
    <location>
        <begin position="458"/>
        <end position="477"/>
    </location>
</feature>
<feature type="transmembrane region" description="Helical; Name=4" evidence="4">
    <location>
        <begin position="478"/>
        <end position="500"/>
    </location>
</feature>
<feature type="topological domain" description="Extracellular" evidence="4">
    <location>
        <begin position="501"/>
        <end position="520"/>
    </location>
</feature>
<feature type="transmembrane region" description="Helical; Name=5" evidence="4">
    <location>
        <begin position="521"/>
        <end position="542"/>
    </location>
</feature>
<feature type="topological domain" description="Cytoplasmic" evidence="4">
    <location>
        <begin position="543"/>
        <end position="565"/>
    </location>
</feature>
<feature type="transmembrane region" description="Helical; Name=6" evidence="4">
    <location>
        <begin position="566"/>
        <end position="589"/>
    </location>
</feature>
<feature type="topological domain" description="Extracellular" evidence="4">
    <location>
        <begin position="590"/>
        <end position="600"/>
    </location>
</feature>
<feature type="transmembrane region" description="Helical; Name=7" evidence="4">
    <location>
        <begin position="601"/>
        <end position="622"/>
    </location>
</feature>
<feature type="topological domain" description="Cytoplasmic" evidence="4">
    <location>
        <begin position="623"/>
        <end position="687"/>
    </location>
</feature>
<feature type="domain" description="LRRNT">
    <location>
        <begin position="18"/>
        <end position="46"/>
    </location>
</feature>
<feature type="repeat" description="LRR 1">
    <location>
        <begin position="49"/>
        <end position="72"/>
    </location>
</feature>
<feature type="repeat" description="LRR 2">
    <location>
        <begin position="73"/>
        <end position="97"/>
    </location>
</feature>
<feature type="repeat" description="LRR 3">
    <location>
        <begin position="98"/>
        <end position="118"/>
    </location>
</feature>
<feature type="repeat" description="LRR 4">
    <location>
        <begin position="119"/>
        <end position="143"/>
    </location>
</feature>
<feature type="repeat" description="LRR 5">
    <location>
        <begin position="144"/>
        <end position="169"/>
    </location>
</feature>
<feature type="repeat" description="LRR 6">
    <location>
        <begin position="170"/>
        <end position="192"/>
    </location>
</feature>
<feature type="repeat" description="LRR 7">
    <location>
        <begin position="193"/>
        <end position="216"/>
    </location>
</feature>
<feature type="repeat" description="LRR 8">
    <location>
        <begin position="217"/>
        <end position="240"/>
    </location>
</feature>
<feature type="repeat" description="LRR 9">
    <location>
        <begin position="241"/>
        <end position="259"/>
    </location>
</feature>
<feature type="modified residue" description="Sulfotyrosine" evidence="3">
    <location>
        <position position="327"/>
    </location>
</feature>
<feature type="glycosylation site" description="N-linked (GlcNAc...) asparagine" evidence="1">
    <location>
        <position position="191"/>
    </location>
</feature>
<feature type="glycosylation site" description="N-linked (GlcNAc...) asparagine" evidence="4">
    <location>
        <position position="199"/>
    </location>
</feature>
<feature type="glycosylation site" description="N-linked (GlcNAc...) asparagine" evidence="1">
    <location>
        <position position="293"/>
    </location>
</feature>
<feature type="disulfide bond" evidence="5">
    <location>
        <begin position="23"/>
        <end position="32"/>
    </location>
</feature>
<feature type="disulfide bond" evidence="3">
    <location>
        <begin position="275"/>
        <end position="338"/>
    </location>
</feature>
<feature type="disulfide bond" evidence="3">
    <location>
        <begin position="276"/>
        <end position="348"/>
    </location>
</feature>
<feature type="disulfide bond" evidence="3">
    <location>
        <begin position="276"/>
        <end position="292"/>
    </location>
</feature>
<feature type="disulfide bond" evidence="3">
    <location>
        <begin position="292"/>
        <end position="330"/>
    </location>
</feature>
<feature type="disulfide bond" evidence="5">
    <location>
        <begin position="434"/>
        <end position="509"/>
    </location>
</feature>
<accession>Q95179</accession>
<comment type="function">
    <text evidence="3">G protein-coupled receptor for follitropin, the follicle-stimulating hormone. Through cAMP production activates the downstream PI3K-AKT and ERK1/ERK2 signaling pathways.</text>
</comment>
<comment type="subunit">
    <text evidence="2 3">Homotrimer. Functions as a homotrimer binding the FSH hormone heterodimer composed of CGA and FSHB (By similarity). Interacts with ARRB2 (By similarity). Interacts with APPL2; interaction is independent of follicle stimulating hormone stimulation (By similarity).</text>
</comment>
<comment type="subcellular location">
    <subcellularLocation>
        <location evidence="3">Cell membrane</location>
        <topology evidence="3">Multi-pass membrane protein</topology>
    </subcellularLocation>
</comment>
<comment type="PTM">
    <text evidence="2">N-glycosylated; indirectly required for FSH-binding, possibly via a conformational change that allows high affinity binding of hormone.</text>
</comment>
<comment type="PTM">
    <text evidence="3">Sulfated.</text>
</comment>
<comment type="similarity">
    <text evidence="5">Belongs to the G-protein coupled receptor 1 family. FSH/LSH/TSH subfamily.</text>
</comment>
<organism>
    <name type="scientific">Equus asinus</name>
    <name type="common">Donkey</name>
    <name type="synonym">Equus africanus asinus</name>
    <dbReference type="NCBI Taxonomy" id="9793"/>
    <lineage>
        <taxon>Eukaryota</taxon>
        <taxon>Metazoa</taxon>
        <taxon>Chordata</taxon>
        <taxon>Craniata</taxon>
        <taxon>Vertebrata</taxon>
        <taxon>Euteleostomi</taxon>
        <taxon>Mammalia</taxon>
        <taxon>Eutheria</taxon>
        <taxon>Laurasiatheria</taxon>
        <taxon>Perissodactyla</taxon>
        <taxon>Equidae</taxon>
        <taxon>Equus</taxon>
    </lineage>
</organism>
<reference key="1">
    <citation type="journal article" date="1997" name="J. Mol. Endocrinol.">
        <title>Cloning, sequencing and in vitro functional expression of recombinant donkey follicle-stimulating hormone receptor: a new insight into the binding specificity of gonadotrophin receptors.</title>
        <authorList>
            <person name="Richard F."/>
            <person name="Martinat N."/>
            <person name="Remy J.-J."/>
            <person name="Salesse R."/>
            <person name="Combarnous Y."/>
        </authorList>
    </citation>
    <scope>NUCLEOTIDE SEQUENCE [MRNA]</scope>
    <source>
        <tissue>Testis</tissue>
    </source>
</reference>
<gene>
    <name type="primary">FSHR</name>
</gene>
<proteinExistence type="evidence at transcript level"/>
<keyword id="KW-1003">Cell membrane</keyword>
<keyword id="KW-1015">Disulfide bond</keyword>
<keyword id="KW-0297">G-protein coupled receptor</keyword>
<keyword id="KW-0325">Glycoprotein</keyword>
<keyword id="KW-0433">Leucine-rich repeat</keyword>
<keyword id="KW-0472">Membrane</keyword>
<keyword id="KW-0675">Receptor</keyword>
<keyword id="KW-1185">Reference proteome</keyword>
<keyword id="KW-0677">Repeat</keyword>
<keyword id="KW-0732">Signal</keyword>
<keyword id="KW-0765">Sulfation</keyword>
<keyword id="KW-0807">Transducer</keyword>
<keyword id="KW-0812">Transmembrane</keyword>
<keyword id="KW-1133">Transmembrane helix</keyword>
<sequence>MALLLVSLLAFLSLGSGCHHQVCHYSNRVFLCQESKVTEIPSDLPRNALELRFVLTKLRVIPKGAFSGFGDLKKIEISQNDVLEVIEANVFSNLPKLHEIRIEKANNLLYIDHDAFQNLPNLQYLLISNTGIKHLPAVHKIQSLQKVLLDIQDNINIHIVERNSFMGLSFESMILRLSKNGIQEIHNCAFNGTQLDELNLSDNNNLEELPNDVFQGASGPVILDISGTRIHSLPNYGLENLKKLRARSTYNLKKLPSLEKFVALMEASLTYPSHCCAFANWRQQTSELQTTCNKSILRQEVDMTQARGERVSLAEDDESMMYSEFDYDLCNEVVDVTCSPKPDAFNPCEDIMGYDILRVLIWFISILAITGNIIVLVILITSQYKLTVPRFLMCNLAFADLCIGIYLLLIASVDIHTKSQYHNYAIDWQTGAGCDAAGFFTVFGSELSVYTLTAITLERWHTITHAMQLECKVQLRHAASVMLVGWIFGFGVGLLPIFGISTYMKVSICLPMDIDSPLSQLYVMSLLVLNVLAFVVICGCYTHIYLTVRNPNIVSSSSDTKIAKRMGILIFTDFLCMAPISFFGISASLKVALITVSKSKILLVLFYPINSCANPFLYAIFTKNFRRDFFILLSKFGCYEMQAQTYRTETSSTGHISHPKNGPCPPTPRVTNGANCTLVPLSHLAQN</sequence>
<protein>
    <recommendedName>
        <fullName>Follicle-stimulating hormone receptor</fullName>
        <shortName>FSH-R</shortName>
    </recommendedName>
    <alternativeName>
        <fullName>Follitropin receptor</fullName>
    </alternativeName>
</protein>